<comment type="function">
    <text evidence="1">Cell division protein that is part of the divisome complex and is recruited early to the Z-ring. Probably stimulates Z-ring formation, perhaps through the cross-linking of FtsZ protofilaments. Its function overlaps with FtsA.</text>
</comment>
<comment type="subunit">
    <text evidence="1">Homodimer. Interacts with FtsZ.</text>
</comment>
<comment type="subcellular location">
    <subcellularLocation>
        <location evidence="1">Cytoplasm</location>
    </subcellularLocation>
    <text evidence="1">Localizes to the division site, in a FtsZ-dependent manner.</text>
</comment>
<comment type="similarity">
    <text evidence="1">Belongs to the SepF family.</text>
</comment>
<name>SEPF_STAS1</name>
<accession>Q49WX1</accession>
<feature type="chain" id="PRO_0000334090" description="Cell division protein SepF">
    <location>
        <begin position="1"/>
        <end position="201"/>
    </location>
</feature>
<feature type="region of interest" description="Disordered" evidence="2">
    <location>
        <begin position="1"/>
        <end position="94"/>
    </location>
</feature>
<feature type="compositionally biased region" description="Acidic residues" evidence="2">
    <location>
        <begin position="13"/>
        <end position="28"/>
    </location>
</feature>
<feature type="compositionally biased region" description="Low complexity" evidence="2">
    <location>
        <begin position="35"/>
        <end position="44"/>
    </location>
</feature>
<feature type="compositionally biased region" description="Polar residues" evidence="2">
    <location>
        <begin position="59"/>
        <end position="88"/>
    </location>
</feature>
<evidence type="ECO:0000255" key="1">
    <source>
        <dbReference type="HAMAP-Rule" id="MF_01197"/>
    </source>
</evidence>
<evidence type="ECO:0000256" key="2">
    <source>
        <dbReference type="SAM" id="MobiDB-lite"/>
    </source>
</evidence>
<keyword id="KW-0131">Cell cycle</keyword>
<keyword id="KW-0132">Cell division</keyword>
<keyword id="KW-0963">Cytoplasm</keyword>
<keyword id="KW-1185">Reference proteome</keyword>
<keyword id="KW-0717">Septation</keyword>
<reference key="1">
    <citation type="journal article" date="2005" name="Proc. Natl. Acad. Sci. U.S.A.">
        <title>Whole genome sequence of Staphylococcus saprophyticus reveals the pathogenesis of uncomplicated urinary tract infection.</title>
        <authorList>
            <person name="Kuroda M."/>
            <person name="Yamashita A."/>
            <person name="Hirakawa H."/>
            <person name="Kumano M."/>
            <person name="Morikawa K."/>
            <person name="Higashide M."/>
            <person name="Maruyama A."/>
            <person name="Inose Y."/>
            <person name="Matoba K."/>
            <person name="Toh H."/>
            <person name="Kuhara S."/>
            <person name="Hattori M."/>
            <person name="Ohta T."/>
        </authorList>
    </citation>
    <scope>NUCLEOTIDE SEQUENCE [LARGE SCALE GENOMIC DNA]</scope>
    <source>
        <strain>ATCC 15305 / DSM 20229 / NCIMB 8711 / NCTC 7292 / S-41</strain>
    </source>
</reference>
<gene>
    <name evidence="1" type="primary">sepF</name>
    <name type="ordered locus">SSP1582</name>
</gene>
<proteinExistence type="inferred from homology"/>
<dbReference type="EMBL" id="AP008934">
    <property type="protein sequence ID" value="BAE18727.1"/>
    <property type="molecule type" value="Genomic_DNA"/>
</dbReference>
<dbReference type="RefSeq" id="WP_002483538.1">
    <property type="nucleotide sequence ID" value="NZ_MTGA01000034.1"/>
</dbReference>
<dbReference type="SMR" id="Q49WX1"/>
<dbReference type="DNASU" id="3615326"/>
<dbReference type="GeneID" id="3615326"/>
<dbReference type="KEGG" id="ssp:SSP1582"/>
<dbReference type="PATRIC" id="fig|342451.11.peg.1584"/>
<dbReference type="eggNOG" id="COG1799">
    <property type="taxonomic scope" value="Bacteria"/>
</dbReference>
<dbReference type="HOGENOM" id="CLU_078499_4_1_9"/>
<dbReference type="OrthoDB" id="9815206at2"/>
<dbReference type="Proteomes" id="UP000006371">
    <property type="component" value="Chromosome"/>
</dbReference>
<dbReference type="GO" id="GO:0005737">
    <property type="term" value="C:cytoplasm"/>
    <property type="evidence" value="ECO:0007669"/>
    <property type="project" value="UniProtKB-SubCell"/>
</dbReference>
<dbReference type="GO" id="GO:0000917">
    <property type="term" value="P:division septum assembly"/>
    <property type="evidence" value="ECO:0007669"/>
    <property type="project" value="UniProtKB-KW"/>
</dbReference>
<dbReference type="GO" id="GO:0043093">
    <property type="term" value="P:FtsZ-dependent cytokinesis"/>
    <property type="evidence" value="ECO:0007669"/>
    <property type="project" value="UniProtKB-UniRule"/>
</dbReference>
<dbReference type="Gene3D" id="3.30.110.150">
    <property type="entry name" value="SepF-like protein"/>
    <property type="match status" value="1"/>
</dbReference>
<dbReference type="HAMAP" id="MF_01197">
    <property type="entry name" value="SepF"/>
    <property type="match status" value="1"/>
</dbReference>
<dbReference type="InterPro" id="IPR023052">
    <property type="entry name" value="Cell_div_SepF"/>
</dbReference>
<dbReference type="InterPro" id="IPR007561">
    <property type="entry name" value="Cell_div_SepF/SepF-rel"/>
</dbReference>
<dbReference type="InterPro" id="IPR038594">
    <property type="entry name" value="SepF-like_sf"/>
</dbReference>
<dbReference type="PANTHER" id="PTHR35798">
    <property type="entry name" value="CELL DIVISION PROTEIN SEPF"/>
    <property type="match status" value="1"/>
</dbReference>
<dbReference type="PANTHER" id="PTHR35798:SF1">
    <property type="entry name" value="CELL DIVISION PROTEIN SEPF"/>
    <property type="match status" value="1"/>
</dbReference>
<dbReference type="Pfam" id="PF04472">
    <property type="entry name" value="SepF"/>
    <property type="match status" value="1"/>
</dbReference>
<protein>
    <recommendedName>
        <fullName evidence="1">Cell division protein SepF</fullName>
    </recommendedName>
</protein>
<organism>
    <name type="scientific">Staphylococcus saprophyticus subsp. saprophyticus (strain ATCC 15305 / DSM 20229 / NCIMB 8711 / NCTC 7292 / S-41)</name>
    <dbReference type="NCBI Taxonomy" id="342451"/>
    <lineage>
        <taxon>Bacteria</taxon>
        <taxon>Bacillati</taxon>
        <taxon>Bacillota</taxon>
        <taxon>Bacilli</taxon>
        <taxon>Bacillales</taxon>
        <taxon>Staphylococcaceae</taxon>
        <taxon>Staphylococcus</taxon>
    </lineage>
</organism>
<sequence>MALKDLFSGFFVVEEEDDELEAPPEENEQQERQQPKQQAQSQNQFTEQPRNVNSERPRSIQSVPKKQSTRLQQSSGERKYQMNNTTSKNNARNVVNMNNQEQENYDFTQESSKMCLFEPRVFSDTQDIADELKNRRATLVNLQRIDKVSAKRIIDFLSGTVYAIGGDIQRVGSDIFLCTPDNVEVAGSITDQIENMEYQGE</sequence>